<reference key="1">
    <citation type="journal article" date="1996" name="Science">
        <title>Complete genome sequence of the methanogenic archaeon, Methanococcus jannaschii.</title>
        <authorList>
            <person name="Bult C.J."/>
            <person name="White O."/>
            <person name="Olsen G.J."/>
            <person name="Zhou L."/>
            <person name="Fleischmann R.D."/>
            <person name="Sutton G.G."/>
            <person name="Blake J.A."/>
            <person name="FitzGerald L.M."/>
            <person name="Clayton R.A."/>
            <person name="Gocayne J.D."/>
            <person name="Kerlavage A.R."/>
            <person name="Dougherty B.A."/>
            <person name="Tomb J.-F."/>
            <person name="Adams M.D."/>
            <person name="Reich C.I."/>
            <person name="Overbeek R."/>
            <person name="Kirkness E.F."/>
            <person name="Weinstock K.G."/>
            <person name="Merrick J.M."/>
            <person name="Glodek A."/>
            <person name="Scott J.L."/>
            <person name="Geoghagen N.S.M."/>
            <person name="Weidman J.F."/>
            <person name="Fuhrmann J.L."/>
            <person name="Nguyen D."/>
            <person name="Utterback T.R."/>
            <person name="Kelley J.M."/>
            <person name="Peterson J.D."/>
            <person name="Sadow P.W."/>
            <person name="Hanna M.C."/>
            <person name="Cotton M.D."/>
            <person name="Roberts K.M."/>
            <person name="Hurst M.A."/>
            <person name="Kaine B.P."/>
            <person name="Borodovsky M."/>
            <person name="Klenk H.-P."/>
            <person name="Fraser C.M."/>
            <person name="Smith H.O."/>
            <person name="Woese C.R."/>
            <person name="Venter J.C."/>
        </authorList>
    </citation>
    <scope>NUCLEOTIDE SEQUENCE [LARGE SCALE GENOMIC DNA]</scope>
    <source>
        <strain>ATCC 43067 / DSM 2661 / JAL-1 / JCM 10045 / NBRC 100440</strain>
    </source>
</reference>
<comment type="function">
    <text evidence="1">Catalyzes the conversion of dihydroorotate to orotate with NAD(+) as electron acceptor.</text>
</comment>
<comment type="catalytic activity">
    <reaction>
        <text>(S)-dihydroorotate + NAD(+) = orotate + NADH + H(+)</text>
        <dbReference type="Rhea" id="RHEA:13513"/>
        <dbReference type="ChEBI" id="CHEBI:15378"/>
        <dbReference type="ChEBI" id="CHEBI:30839"/>
        <dbReference type="ChEBI" id="CHEBI:30864"/>
        <dbReference type="ChEBI" id="CHEBI:57540"/>
        <dbReference type="ChEBI" id="CHEBI:57945"/>
        <dbReference type="EC" id="1.3.1.14"/>
    </reaction>
</comment>
<comment type="cofactor">
    <cofactor evidence="1">
        <name>FMN</name>
        <dbReference type="ChEBI" id="CHEBI:58210"/>
    </cofactor>
    <text evidence="1">Binds 1 FMN per subunit.</text>
</comment>
<comment type="pathway">
    <text>Pyrimidine metabolism; UMP biosynthesis via de novo pathway; orotate from (S)-dihydroorotate (NAD(+) route): step 1/1.</text>
</comment>
<comment type="subunit">
    <text evidence="1">Heterotetramer of 2 PyrK and 2 PyrD type B subunits.</text>
</comment>
<comment type="subcellular location">
    <subcellularLocation>
        <location evidence="1">Cytoplasm</location>
    </subcellularLocation>
</comment>
<comment type="similarity">
    <text evidence="2">Belongs to the dihydroorotate dehydrogenase family. Type 1 subfamily.</text>
</comment>
<dbReference type="EC" id="1.3.1.14"/>
<dbReference type="EMBL" id="L77117">
    <property type="protein sequence ID" value="AAB98649.1"/>
    <property type="molecule type" value="Genomic_DNA"/>
</dbReference>
<dbReference type="PIR" id="F64381">
    <property type="entry name" value="F64381"/>
</dbReference>
<dbReference type="SMR" id="Q58070"/>
<dbReference type="FunCoup" id="Q58070">
    <property type="interactions" value="252"/>
</dbReference>
<dbReference type="STRING" id="243232.MJ_0654"/>
<dbReference type="PaxDb" id="243232-MJ_0654"/>
<dbReference type="EnsemblBacteria" id="AAB98649">
    <property type="protein sequence ID" value="AAB98649"/>
    <property type="gene ID" value="MJ_0654"/>
</dbReference>
<dbReference type="KEGG" id="mja:MJ_0654"/>
<dbReference type="eggNOG" id="arCOG00603">
    <property type="taxonomic scope" value="Archaea"/>
</dbReference>
<dbReference type="HOGENOM" id="CLU_042042_0_1_2"/>
<dbReference type="InParanoid" id="Q58070"/>
<dbReference type="PhylomeDB" id="Q58070"/>
<dbReference type="UniPathway" id="UPA00070">
    <property type="reaction ID" value="UER00945"/>
</dbReference>
<dbReference type="Proteomes" id="UP000000805">
    <property type="component" value="Chromosome"/>
</dbReference>
<dbReference type="GO" id="GO:0005737">
    <property type="term" value="C:cytoplasm"/>
    <property type="evidence" value="ECO:0000318"/>
    <property type="project" value="GO_Central"/>
</dbReference>
<dbReference type="GO" id="GO:0004589">
    <property type="term" value="F:dihydroorotate dehydrogenase (NAD+) activity"/>
    <property type="evidence" value="ECO:0007669"/>
    <property type="project" value="UniProtKB-EC"/>
</dbReference>
<dbReference type="GO" id="GO:0004152">
    <property type="term" value="F:dihydroorotate dehydrogenase activity"/>
    <property type="evidence" value="ECO:0000318"/>
    <property type="project" value="GO_Central"/>
</dbReference>
<dbReference type="GO" id="GO:0006207">
    <property type="term" value="P:'de novo' pyrimidine nucleobase biosynthetic process"/>
    <property type="evidence" value="ECO:0000318"/>
    <property type="project" value="GO_Central"/>
</dbReference>
<dbReference type="GO" id="GO:0044205">
    <property type="term" value="P:'de novo' UMP biosynthetic process"/>
    <property type="evidence" value="ECO:0007669"/>
    <property type="project" value="UniProtKB-UniRule"/>
</dbReference>
<dbReference type="CDD" id="cd04740">
    <property type="entry name" value="DHOD_1B_like"/>
    <property type="match status" value="1"/>
</dbReference>
<dbReference type="FunFam" id="3.20.20.70:FF:000027">
    <property type="entry name" value="Dihydropyrimidine dehydrogenase [NADP(+)]"/>
    <property type="match status" value="1"/>
</dbReference>
<dbReference type="Gene3D" id="3.20.20.70">
    <property type="entry name" value="Aldolase class I"/>
    <property type="match status" value="1"/>
</dbReference>
<dbReference type="HAMAP" id="MF_00224">
    <property type="entry name" value="DHO_dh_type1"/>
    <property type="match status" value="1"/>
</dbReference>
<dbReference type="InterPro" id="IPR013785">
    <property type="entry name" value="Aldolase_TIM"/>
</dbReference>
<dbReference type="InterPro" id="IPR050074">
    <property type="entry name" value="DHO_dehydrogenase"/>
</dbReference>
<dbReference type="InterPro" id="IPR033888">
    <property type="entry name" value="DHOD_1B"/>
</dbReference>
<dbReference type="InterPro" id="IPR024920">
    <property type="entry name" value="Dihydroorotate_DH_1"/>
</dbReference>
<dbReference type="InterPro" id="IPR012135">
    <property type="entry name" value="Dihydroorotate_DH_1_2"/>
</dbReference>
<dbReference type="InterPro" id="IPR005720">
    <property type="entry name" value="Dihydroorotate_DH_cat"/>
</dbReference>
<dbReference type="InterPro" id="IPR001295">
    <property type="entry name" value="Dihydroorotate_DH_CS"/>
</dbReference>
<dbReference type="InterPro" id="IPR049622">
    <property type="entry name" value="Dihydroorotate_DH_I"/>
</dbReference>
<dbReference type="NCBIfam" id="NF005574">
    <property type="entry name" value="PRK07259.1"/>
    <property type="match status" value="1"/>
</dbReference>
<dbReference type="NCBIfam" id="TIGR01037">
    <property type="entry name" value="pyrD_sub1_fam"/>
    <property type="match status" value="1"/>
</dbReference>
<dbReference type="PANTHER" id="PTHR48109:SF1">
    <property type="entry name" value="DIHYDROOROTATE DEHYDROGENASE (FUMARATE)"/>
    <property type="match status" value="1"/>
</dbReference>
<dbReference type="PANTHER" id="PTHR48109">
    <property type="entry name" value="DIHYDROOROTATE DEHYDROGENASE (QUINONE), MITOCHONDRIAL-RELATED"/>
    <property type="match status" value="1"/>
</dbReference>
<dbReference type="Pfam" id="PF01180">
    <property type="entry name" value="DHO_dh"/>
    <property type="match status" value="1"/>
</dbReference>
<dbReference type="PIRSF" id="PIRSF000164">
    <property type="entry name" value="DHO_oxidase"/>
    <property type="match status" value="1"/>
</dbReference>
<dbReference type="SUPFAM" id="SSF51395">
    <property type="entry name" value="FMN-linked oxidoreductases"/>
    <property type="match status" value="1"/>
</dbReference>
<dbReference type="PROSITE" id="PS00911">
    <property type="entry name" value="DHODEHASE_1"/>
    <property type="match status" value="1"/>
</dbReference>
<dbReference type="PROSITE" id="PS00912">
    <property type="entry name" value="DHODEHASE_2"/>
    <property type="match status" value="1"/>
</dbReference>
<accession>Q58070</accession>
<proteinExistence type="inferred from homology"/>
<name>PYRDB_METJA</name>
<feature type="chain" id="PRO_0000148409" description="Dihydroorotate dehydrogenase B (NAD(+)), catalytic subunit">
    <location>
        <begin position="1"/>
        <end position="306"/>
    </location>
</feature>
<feature type="active site" description="Nucleophile">
    <location>
        <position position="133"/>
    </location>
</feature>
<feature type="binding site" evidence="1">
    <location>
        <position position="23"/>
    </location>
    <ligand>
        <name>FMN</name>
        <dbReference type="ChEBI" id="CHEBI:58210"/>
    </ligand>
</feature>
<feature type="binding site" evidence="1">
    <location>
        <begin position="47"/>
        <end position="48"/>
    </location>
    <ligand>
        <name>FMN</name>
        <dbReference type="ChEBI" id="CHEBI:58210"/>
    </ligand>
</feature>
<feature type="binding site" evidence="1">
    <location>
        <position position="47"/>
    </location>
    <ligand>
        <name>substrate</name>
    </ligand>
</feature>
<feature type="binding site" evidence="1">
    <location>
        <begin position="71"/>
        <end position="75"/>
    </location>
    <ligand>
        <name>substrate</name>
    </ligand>
</feature>
<feature type="binding site" evidence="1">
    <location>
        <position position="130"/>
    </location>
    <ligand>
        <name>FMN</name>
        <dbReference type="ChEBI" id="CHEBI:58210"/>
    </ligand>
</feature>
<feature type="binding site" evidence="1">
    <location>
        <position position="130"/>
    </location>
    <ligand>
        <name>substrate</name>
    </ligand>
</feature>
<feature type="binding site" evidence="1">
    <location>
        <position position="168"/>
    </location>
    <ligand>
        <name>FMN</name>
        <dbReference type="ChEBI" id="CHEBI:58210"/>
    </ligand>
</feature>
<feature type="binding site" evidence="1">
    <location>
        <position position="194"/>
    </location>
    <ligand>
        <name>FMN</name>
        <dbReference type="ChEBI" id="CHEBI:58210"/>
    </ligand>
</feature>
<feature type="binding site" evidence="1">
    <location>
        <begin position="195"/>
        <end position="196"/>
    </location>
    <ligand>
        <name>substrate</name>
    </ligand>
</feature>
<feature type="binding site" evidence="1">
    <location>
        <position position="220"/>
    </location>
    <ligand>
        <name>FMN</name>
        <dbReference type="ChEBI" id="CHEBI:58210"/>
    </ligand>
</feature>
<feature type="binding site" evidence="1">
    <location>
        <begin position="246"/>
        <end position="247"/>
    </location>
    <ligand>
        <name>FMN</name>
        <dbReference type="ChEBI" id="CHEBI:58210"/>
    </ligand>
</feature>
<feature type="binding site" evidence="1">
    <location>
        <begin position="268"/>
        <end position="269"/>
    </location>
    <ligand>
        <name>FMN</name>
        <dbReference type="ChEBI" id="CHEBI:58210"/>
    </ligand>
</feature>
<keyword id="KW-0963">Cytoplasm</keyword>
<keyword id="KW-0285">Flavoprotein</keyword>
<keyword id="KW-0288">FMN</keyword>
<keyword id="KW-0520">NAD</keyword>
<keyword id="KW-0560">Oxidoreductase</keyword>
<keyword id="KW-0665">Pyrimidine biosynthesis</keyword>
<keyword id="KW-1185">Reference proteome</keyword>
<protein>
    <recommendedName>
        <fullName>Dihydroorotate dehydrogenase B (NAD(+)), catalytic subunit</fullName>
        <shortName>DHOD B</shortName>
        <shortName>DHODase B</shortName>
        <shortName>DHOdehase B</shortName>
        <ecNumber>1.3.1.14</ecNumber>
    </recommendedName>
    <alternativeName>
        <fullName>Dihydroorotate oxidase B</fullName>
    </alternativeName>
    <alternativeName>
        <fullName>Orotate reductase (NADH)</fullName>
    </alternativeName>
</protein>
<evidence type="ECO:0000250" key="1"/>
<evidence type="ECO:0000305" key="2"/>
<gene>
    <name type="primary">pyrD</name>
    <name type="ordered locus">MJ0654</name>
</gene>
<organism>
    <name type="scientific">Methanocaldococcus jannaschii (strain ATCC 43067 / DSM 2661 / JAL-1 / JCM 10045 / NBRC 100440)</name>
    <name type="common">Methanococcus jannaschii</name>
    <dbReference type="NCBI Taxonomy" id="243232"/>
    <lineage>
        <taxon>Archaea</taxon>
        <taxon>Methanobacteriati</taxon>
        <taxon>Methanobacteriota</taxon>
        <taxon>Methanomada group</taxon>
        <taxon>Methanococci</taxon>
        <taxon>Methanococcales</taxon>
        <taxon>Methanocaldococcaceae</taxon>
        <taxon>Methanocaldococcus</taxon>
    </lineage>
</organism>
<sequence length="306" mass="32940">MGECMLKTNICGIEFKNPVFLASGIMGETGSALKRIAKGGAGAVTTKSIGLNPNPGHKNPTIVEVYGGFLNAMGLPNPGVDEYLEEIEKVRDELNRMDVRIIGSIYGKDEEEFAEVAKKMERYVDIIELNISCPHAKGYGATIGQNPDLSYDVCKAVKKAVKIPVFAKLTPNVTDIIEIAQAVVDAGVDGLVAINTVRGMAIDIRAKKPILANKFGGLSGKAIKSIGIKVVWDLYENFDVPIIGVGGIMSGEDAIEYMMAGASAVQIGSGVYYRGYDIFKKVCDEIISFLKEENLTLEEIVGMAHE</sequence>